<accession>Q92F59</accession>
<proteinExistence type="inferred from homology"/>
<protein>
    <recommendedName>
        <fullName evidence="1">RQC P-site tRNA stabilizing factor</fullName>
        <shortName evidence="1">RqcP</shortName>
    </recommendedName>
    <alternativeName>
        <fullName evidence="1">Ribosome-associated protein quality control protein P</fullName>
    </alternativeName>
</protein>
<evidence type="ECO:0000255" key="1">
    <source>
        <dbReference type="HAMAP-Rule" id="MF_00871"/>
    </source>
</evidence>
<dbReference type="EMBL" id="AL596164">
    <property type="protein sequence ID" value="CAC95481.1"/>
    <property type="molecule type" value="Genomic_DNA"/>
</dbReference>
<dbReference type="PIR" id="AI1463">
    <property type="entry name" value="AI1463"/>
</dbReference>
<dbReference type="SMR" id="Q92F59"/>
<dbReference type="STRING" id="272626.gene:17564560"/>
<dbReference type="KEGG" id="lin:lin0248"/>
<dbReference type="eggNOG" id="COG1188">
    <property type="taxonomic scope" value="Bacteria"/>
</dbReference>
<dbReference type="HOGENOM" id="CLU_101003_4_0_9"/>
<dbReference type="Proteomes" id="UP000002513">
    <property type="component" value="Chromosome"/>
</dbReference>
<dbReference type="GO" id="GO:0019843">
    <property type="term" value="F:rRNA binding"/>
    <property type="evidence" value="ECO:0007669"/>
    <property type="project" value="UniProtKB-KW"/>
</dbReference>
<dbReference type="GO" id="GO:0000049">
    <property type="term" value="F:tRNA binding"/>
    <property type="evidence" value="ECO:0007669"/>
    <property type="project" value="UniProtKB-KW"/>
</dbReference>
<dbReference type="GO" id="GO:0006412">
    <property type="term" value="P:translation"/>
    <property type="evidence" value="ECO:0007669"/>
    <property type="project" value="UniProtKB-KW"/>
</dbReference>
<dbReference type="CDD" id="cd00165">
    <property type="entry name" value="S4"/>
    <property type="match status" value="1"/>
</dbReference>
<dbReference type="Gene3D" id="3.10.290.10">
    <property type="entry name" value="RNA-binding S4 domain"/>
    <property type="match status" value="1"/>
</dbReference>
<dbReference type="HAMAP" id="MF_00871">
    <property type="entry name" value="RqcP"/>
    <property type="match status" value="1"/>
</dbReference>
<dbReference type="InterPro" id="IPR025490">
    <property type="entry name" value="RqcP"/>
</dbReference>
<dbReference type="InterPro" id="IPR002942">
    <property type="entry name" value="S4_RNA-bd"/>
</dbReference>
<dbReference type="InterPro" id="IPR036986">
    <property type="entry name" value="S4_RNA-bd_sf"/>
</dbReference>
<dbReference type="Pfam" id="PF01479">
    <property type="entry name" value="S4"/>
    <property type="match status" value="1"/>
</dbReference>
<dbReference type="PIRSF" id="PIRSF038881">
    <property type="entry name" value="RNAbp_HP1423"/>
    <property type="match status" value="1"/>
</dbReference>
<dbReference type="SMART" id="SM00363">
    <property type="entry name" value="S4"/>
    <property type="match status" value="1"/>
</dbReference>
<dbReference type="SUPFAM" id="SSF55174">
    <property type="entry name" value="Alpha-L RNA-binding motif"/>
    <property type="match status" value="1"/>
</dbReference>
<dbReference type="PROSITE" id="PS50889">
    <property type="entry name" value="S4"/>
    <property type="match status" value="1"/>
</dbReference>
<organism>
    <name type="scientific">Listeria innocua serovar 6a (strain ATCC BAA-680 / CLIP 11262)</name>
    <dbReference type="NCBI Taxonomy" id="272626"/>
    <lineage>
        <taxon>Bacteria</taxon>
        <taxon>Bacillati</taxon>
        <taxon>Bacillota</taxon>
        <taxon>Bacilli</taxon>
        <taxon>Bacillales</taxon>
        <taxon>Listeriaceae</taxon>
        <taxon>Listeria</taxon>
    </lineage>
</organism>
<comment type="function">
    <text evidence="1">Key component of the ribosome quality control system (RQC), a ribosome-associated complex that mediates the extraction of incompletely synthesized nascent chains from stalled ribosomes and their subsequent degradation. RqcH recruits Ala-charged tRNA, and with RqcP directs the elongation of stalled nascent chains on 50S ribosomal subunits, leading to non-templated C-terminal alanine extensions (Ala tail). The Ala tail promotes nascent chain degradation. RqcP is associated with the translocation-like movement of the peptidyl-tRNA from the A-site into the P-site.</text>
</comment>
<comment type="subunit">
    <text evidence="1">Associates with stalled 50S ribosomal subunits. Binds to RqcH, 23S rRNA and the P-site tRNA. Does not require RqcH for association with 50S subunits.</text>
</comment>
<comment type="similarity">
    <text evidence="1">Belongs to the RqcP family.</text>
</comment>
<feature type="chain" id="PRO_0000201749" description="RQC P-site tRNA stabilizing factor">
    <location>
        <begin position="1"/>
        <end position="92"/>
    </location>
</feature>
<feature type="domain" description="S4 RNA-binding" evidence="1">
    <location>
        <begin position="5"/>
        <end position="65"/>
    </location>
</feature>
<gene>
    <name evidence="1" type="primary">rqcP</name>
    <name type="ordered locus">lin0248</name>
</gene>
<keyword id="KW-0648">Protein biosynthesis</keyword>
<keyword id="KW-0694">RNA-binding</keyword>
<keyword id="KW-0699">rRNA-binding</keyword>
<keyword id="KW-0820">tRNA-binding</keyword>
<sequence length="92" mass="10435">MATTMRLDKYLKVSRLIKRRTVAKEVAEKGRIAVNGVTAKPGTNVKSGDELVIRFGPKIVTAKIERLEENAKKEQATEMYTILKEERTDESR</sequence>
<reference key="1">
    <citation type="journal article" date="2001" name="Science">
        <title>Comparative genomics of Listeria species.</title>
        <authorList>
            <person name="Glaser P."/>
            <person name="Frangeul L."/>
            <person name="Buchrieser C."/>
            <person name="Rusniok C."/>
            <person name="Amend A."/>
            <person name="Baquero F."/>
            <person name="Berche P."/>
            <person name="Bloecker H."/>
            <person name="Brandt P."/>
            <person name="Chakraborty T."/>
            <person name="Charbit A."/>
            <person name="Chetouani F."/>
            <person name="Couve E."/>
            <person name="de Daruvar A."/>
            <person name="Dehoux P."/>
            <person name="Domann E."/>
            <person name="Dominguez-Bernal G."/>
            <person name="Duchaud E."/>
            <person name="Durant L."/>
            <person name="Dussurget O."/>
            <person name="Entian K.-D."/>
            <person name="Fsihi H."/>
            <person name="Garcia-del Portillo F."/>
            <person name="Garrido P."/>
            <person name="Gautier L."/>
            <person name="Goebel W."/>
            <person name="Gomez-Lopez N."/>
            <person name="Hain T."/>
            <person name="Hauf J."/>
            <person name="Jackson D."/>
            <person name="Jones L.-M."/>
            <person name="Kaerst U."/>
            <person name="Kreft J."/>
            <person name="Kuhn M."/>
            <person name="Kunst F."/>
            <person name="Kurapkat G."/>
            <person name="Madueno E."/>
            <person name="Maitournam A."/>
            <person name="Mata Vicente J."/>
            <person name="Ng E."/>
            <person name="Nedjari H."/>
            <person name="Nordsiek G."/>
            <person name="Novella S."/>
            <person name="de Pablos B."/>
            <person name="Perez-Diaz J.-C."/>
            <person name="Purcell R."/>
            <person name="Remmel B."/>
            <person name="Rose M."/>
            <person name="Schlueter T."/>
            <person name="Simoes N."/>
            <person name="Tierrez A."/>
            <person name="Vazquez-Boland J.-A."/>
            <person name="Voss H."/>
            <person name="Wehland J."/>
            <person name="Cossart P."/>
        </authorList>
    </citation>
    <scope>NUCLEOTIDE SEQUENCE [LARGE SCALE GENOMIC DNA]</scope>
    <source>
        <strain>ATCC BAA-680 / CLIP 11262</strain>
    </source>
</reference>
<name>RQCP_LISIN</name>